<dbReference type="EMBL" id="AJ506156">
    <property type="protein sequence ID" value="CAD45096.2"/>
    <property type="status" value="ALT_INIT"/>
    <property type="molecule type" value="Genomic_DNA"/>
</dbReference>
<dbReference type="RefSeq" id="NP_904088.2">
    <property type="nucleotide sequence ID" value="NC_005086.1"/>
</dbReference>
<dbReference type="SMR" id="Q70Y11"/>
<dbReference type="STRING" id="13333.Q70Y11"/>
<dbReference type="GeneID" id="2546559"/>
<dbReference type="KEGG" id="atr:2546559"/>
<dbReference type="eggNOG" id="KOG0832">
    <property type="taxonomic scope" value="Eukaryota"/>
</dbReference>
<dbReference type="OrthoDB" id="565471at2759"/>
<dbReference type="Proteomes" id="UP000017836">
    <property type="component" value="Chloroplast"/>
</dbReference>
<dbReference type="GO" id="GO:0009507">
    <property type="term" value="C:chloroplast"/>
    <property type="evidence" value="ECO:0007669"/>
    <property type="project" value="UniProtKB-SubCell"/>
</dbReference>
<dbReference type="GO" id="GO:0005763">
    <property type="term" value="C:mitochondrial small ribosomal subunit"/>
    <property type="evidence" value="ECO:0000318"/>
    <property type="project" value="GO_Central"/>
</dbReference>
<dbReference type="GO" id="GO:0003735">
    <property type="term" value="F:structural constituent of ribosome"/>
    <property type="evidence" value="ECO:0000318"/>
    <property type="project" value="GO_Central"/>
</dbReference>
<dbReference type="GO" id="GO:0006412">
    <property type="term" value="P:translation"/>
    <property type="evidence" value="ECO:0007669"/>
    <property type="project" value="UniProtKB-UniRule"/>
</dbReference>
<dbReference type="CDD" id="cd01425">
    <property type="entry name" value="RPS2"/>
    <property type="match status" value="1"/>
</dbReference>
<dbReference type="FunFam" id="1.10.287.610:FF:000001">
    <property type="entry name" value="30S ribosomal protein S2"/>
    <property type="match status" value="1"/>
</dbReference>
<dbReference type="Gene3D" id="3.40.50.10490">
    <property type="entry name" value="Glucose-6-phosphate isomerase like protein, domain 1"/>
    <property type="match status" value="1"/>
</dbReference>
<dbReference type="Gene3D" id="1.10.287.610">
    <property type="entry name" value="Helix hairpin bin"/>
    <property type="match status" value="1"/>
</dbReference>
<dbReference type="HAMAP" id="MF_00291_B">
    <property type="entry name" value="Ribosomal_uS2_B"/>
    <property type="match status" value="1"/>
</dbReference>
<dbReference type="InterPro" id="IPR001865">
    <property type="entry name" value="Ribosomal_uS2"/>
</dbReference>
<dbReference type="InterPro" id="IPR005706">
    <property type="entry name" value="Ribosomal_uS2_bac/mit/plastid"/>
</dbReference>
<dbReference type="InterPro" id="IPR018130">
    <property type="entry name" value="Ribosomal_uS2_CS"/>
</dbReference>
<dbReference type="InterPro" id="IPR023591">
    <property type="entry name" value="Ribosomal_uS2_flav_dom_sf"/>
</dbReference>
<dbReference type="NCBIfam" id="TIGR01011">
    <property type="entry name" value="rpsB_bact"/>
    <property type="match status" value="1"/>
</dbReference>
<dbReference type="PANTHER" id="PTHR12534">
    <property type="entry name" value="30S RIBOSOMAL PROTEIN S2 PROKARYOTIC AND ORGANELLAR"/>
    <property type="match status" value="1"/>
</dbReference>
<dbReference type="PANTHER" id="PTHR12534:SF0">
    <property type="entry name" value="SMALL RIBOSOMAL SUBUNIT PROTEIN US2M"/>
    <property type="match status" value="1"/>
</dbReference>
<dbReference type="Pfam" id="PF00318">
    <property type="entry name" value="Ribosomal_S2"/>
    <property type="match status" value="1"/>
</dbReference>
<dbReference type="PRINTS" id="PR00395">
    <property type="entry name" value="RIBOSOMALS2"/>
</dbReference>
<dbReference type="SUPFAM" id="SSF52313">
    <property type="entry name" value="Ribosomal protein S2"/>
    <property type="match status" value="1"/>
</dbReference>
<dbReference type="PROSITE" id="PS00962">
    <property type="entry name" value="RIBOSOMAL_S2_1"/>
    <property type="match status" value="1"/>
</dbReference>
<dbReference type="PROSITE" id="PS00963">
    <property type="entry name" value="RIBOSOMAL_S2_2"/>
    <property type="match status" value="1"/>
</dbReference>
<reference key="1">
    <citation type="journal article" date="2003" name="Mol. Biol. Evol.">
        <title>Analysis of the Amborella trichopoda chloroplast genome sequence suggests that Amborella is not a basal angiosperm.</title>
        <authorList>
            <person name="Goremykin V.V."/>
            <person name="Hirsch-Ernst K.I."/>
            <person name="Wolfl S."/>
            <person name="Hellwig F.H."/>
        </authorList>
    </citation>
    <scope>NUCLEOTIDE SEQUENCE [LARGE SCALE GENOMIC DNA]</scope>
</reference>
<comment type="subcellular location">
    <subcellularLocation>
        <location>Plastid</location>
        <location>Chloroplast</location>
    </subcellularLocation>
</comment>
<comment type="similarity">
    <text evidence="1">Belongs to the universal ribosomal protein uS2 family.</text>
</comment>
<comment type="sequence caution" evidence="1">
    <conflict type="erroneous initiation">
        <sequence resource="EMBL-CDS" id="CAD45096"/>
    </conflict>
</comment>
<name>RR2_AMBTC</name>
<gene>
    <name type="primary">rps2</name>
</gene>
<feature type="chain" id="PRO_0000352089" description="Small ribosomal subunit protein uS2c">
    <location>
        <begin position="1"/>
        <end position="236"/>
    </location>
</feature>
<protein>
    <recommendedName>
        <fullName evidence="1">Small ribosomal subunit protein uS2c</fullName>
    </recommendedName>
    <alternativeName>
        <fullName>30S ribosomal protein S2, chloroplastic</fullName>
    </alternativeName>
</protein>
<sequence length="236" mass="26614">MARRYWDINLEEMMGAGVHFGHGTRKWNPRMAPYISGKRKGIHITNLTRTARPLSEACDLVFDAASRGKHFLIVGTKDKAADSVASAAIRARCHYVNKKWLGGMSTNWSTTETRLHKFRDLRAEQKMGRFKRLPKRDAAMLKRQLSHLQTYLGGIKYMTGLPDIVIIVDHQEEYTAIRECLTLGIPTICLIDTNCDPDLADIPIPANDDAIASIQLILNKLVLAIREGHYSYLGSH</sequence>
<keyword id="KW-0150">Chloroplast</keyword>
<keyword id="KW-0934">Plastid</keyword>
<keyword id="KW-1185">Reference proteome</keyword>
<keyword id="KW-0687">Ribonucleoprotein</keyword>
<keyword id="KW-0689">Ribosomal protein</keyword>
<proteinExistence type="inferred from homology"/>
<organism>
    <name type="scientific">Amborella trichopoda</name>
    <dbReference type="NCBI Taxonomy" id="13333"/>
    <lineage>
        <taxon>Eukaryota</taxon>
        <taxon>Viridiplantae</taxon>
        <taxon>Streptophyta</taxon>
        <taxon>Embryophyta</taxon>
        <taxon>Tracheophyta</taxon>
        <taxon>Spermatophyta</taxon>
        <taxon>Magnoliopsida</taxon>
        <taxon>Amborellales</taxon>
        <taxon>Amborellaceae</taxon>
        <taxon>Amborella</taxon>
    </lineage>
</organism>
<geneLocation type="chloroplast"/>
<accession>Q70Y11</accession>
<evidence type="ECO:0000305" key="1"/>